<sequence>MNTLPEQYANTALPTLSGQPQNPCAWPRDELTVGGIKAHIDTFQRWLGDAFDNGISAEQLIEARTEFIDQLLQRLWIEAGFSQIADLALVAVGGYGRGELHPLSDIDLLILSRKKLPDDQAQKVGELLTLLWDVKLEVGHSVRTLEECMLEGLSDLTVATNLIESRLLIGDVALFLELQKHIFSEGFWPSDKFYAAKVEEQNQRHQRYHGTSYNLEPDIKSSPGGLRDIHTLQWVARRHFGATSLDEMVGFGFLTSAERAELNECLHILWRIRFALHLVVSRYDNRLLFDRQLSVAQRLNYSGEGNEPVERMMKDYFRVTRRVSELNQMLLQLFDEAILALPADEKPRPIDDEFQLRGTLIDLRDETLFMRQPEAILRMFYTMVRNSAITGIYSTTLRQLRHARRHLQQPLCNIPEARKLFLSILRHPGAVRRGLLPMHRHSVLGAYMPQWSHIVGQMQFDLFHAYTVDEHTIRVMLKLESFASEETRQRHPLCVDVWPRLPSTELIFIAALFHDIAKGRGGDHSILGAQDVVHFAELHGLNSRETQLVAWLVRQHLLMSVTAQRRDIQDPEVIKQFAEEVQTENRLRYLVCLTVADICATNETLWNSWKQSLLRELYFATEKQLRRGMQNTPDMRERVRHHQLQALALLRMDNIDEEALHQIWSRCRANYFVRHSPNQLAWHARHLLQHDLSKPLVLLSPQATRGGTEIFIWSPDRPYLFAAVCAELDRRNLSVHDAQIFTTRDGMAMDTFIVLEPDGSPLSADRHEVIRFGLEQVLTQSSWQPPQPRRQPAKLRHFTVETEVTFLPTHTDRKSFLELIALDQPGLLARVGKIFADLGISLHGARITTIGERVEDLFIIATADRRALNNELQQEVHQRLTEALNPNDKG</sequence>
<gene>
    <name evidence="1" type="primary">glnD</name>
    <name type="ordered locus">Ecok1_01570</name>
    <name type="ORF">APECO1_1820</name>
</gene>
<proteinExistence type="inferred from homology"/>
<comment type="function">
    <text evidence="1">Modifies, by uridylylation and deuridylylation, the PII regulatory proteins (GlnB and homologs), in response to the nitrogen status of the cell that GlnD senses through the glutamine level. Under low glutamine levels, catalyzes the conversion of the PII proteins and UTP to PII-UMP and PPi, while under higher glutamine levels, GlnD hydrolyzes PII-UMP to PII and UMP (deuridylylation). Thus, controls uridylylation state and activity of the PII proteins, and plays an important role in the regulation of nitrogen assimilation and metabolism.</text>
</comment>
<comment type="catalytic activity">
    <reaction evidence="1">
        <text>[protein-PII]-L-tyrosine + UTP = [protein-PII]-uridylyl-L-tyrosine + diphosphate</text>
        <dbReference type="Rhea" id="RHEA:13673"/>
        <dbReference type="Rhea" id="RHEA-COMP:12147"/>
        <dbReference type="Rhea" id="RHEA-COMP:12148"/>
        <dbReference type="ChEBI" id="CHEBI:33019"/>
        <dbReference type="ChEBI" id="CHEBI:46398"/>
        <dbReference type="ChEBI" id="CHEBI:46858"/>
        <dbReference type="ChEBI" id="CHEBI:90602"/>
        <dbReference type="EC" id="2.7.7.59"/>
    </reaction>
</comment>
<comment type="catalytic activity">
    <reaction evidence="1">
        <text>[protein-PII]-uridylyl-L-tyrosine + H2O = [protein-PII]-L-tyrosine + UMP + H(+)</text>
        <dbReference type="Rhea" id="RHEA:48600"/>
        <dbReference type="Rhea" id="RHEA-COMP:12147"/>
        <dbReference type="Rhea" id="RHEA-COMP:12148"/>
        <dbReference type="ChEBI" id="CHEBI:15377"/>
        <dbReference type="ChEBI" id="CHEBI:15378"/>
        <dbReference type="ChEBI" id="CHEBI:46858"/>
        <dbReference type="ChEBI" id="CHEBI:57865"/>
        <dbReference type="ChEBI" id="CHEBI:90602"/>
    </reaction>
</comment>
<comment type="cofactor">
    <cofactor evidence="1">
        <name>Mg(2+)</name>
        <dbReference type="ChEBI" id="CHEBI:18420"/>
    </cofactor>
</comment>
<comment type="activity regulation">
    <text evidence="1">Uridylyltransferase (UTase) activity is inhibited by glutamine, while glutamine activates uridylyl-removing (UR) activity.</text>
</comment>
<comment type="domain">
    <text evidence="1">Has four distinct domains: an N-terminal nucleotidyltransferase (NT) domain responsible for UTase activity, a central HD domain that encodes UR activity, and two C-terminal ACT domains that seem to have a role in glutamine sensing.</text>
</comment>
<comment type="similarity">
    <text evidence="1">Belongs to the GlnD family.</text>
</comment>
<keyword id="KW-0378">Hydrolase</keyword>
<keyword id="KW-0460">Magnesium</keyword>
<keyword id="KW-0511">Multifunctional enzyme</keyword>
<keyword id="KW-0548">Nucleotidyltransferase</keyword>
<keyword id="KW-1185">Reference proteome</keyword>
<keyword id="KW-0677">Repeat</keyword>
<keyword id="KW-0808">Transferase</keyword>
<accession>A1A7L1</accession>
<evidence type="ECO:0000255" key="1">
    <source>
        <dbReference type="HAMAP-Rule" id="MF_00277"/>
    </source>
</evidence>
<evidence type="ECO:0000255" key="2">
    <source>
        <dbReference type="PROSITE-ProRule" id="PRU01175"/>
    </source>
</evidence>
<dbReference type="EC" id="2.7.7.59" evidence="1"/>
<dbReference type="EC" id="3.1.4.-" evidence="1"/>
<dbReference type="EMBL" id="CP000468">
    <property type="protein sequence ID" value="ABI99650.1"/>
    <property type="molecule type" value="Genomic_DNA"/>
</dbReference>
<dbReference type="RefSeq" id="WP_001094597.1">
    <property type="nucleotide sequence ID" value="NZ_CADILS010000027.1"/>
</dbReference>
<dbReference type="SMR" id="A1A7L1"/>
<dbReference type="KEGG" id="ecv:APECO1_1820"/>
<dbReference type="HOGENOM" id="CLU_012833_0_0_6"/>
<dbReference type="Proteomes" id="UP000008216">
    <property type="component" value="Chromosome"/>
</dbReference>
<dbReference type="GO" id="GO:0008773">
    <property type="term" value="F:[protein-PII] uridylyltransferase activity"/>
    <property type="evidence" value="ECO:0007669"/>
    <property type="project" value="UniProtKB-UniRule"/>
</dbReference>
<dbReference type="GO" id="GO:0008081">
    <property type="term" value="F:phosphoric diester hydrolase activity"/>
    <property type="evidence" value="ECO:0007669"/>
    <property type="project" value="UniProtKB-UniRule"/>
</dbReference>
<dbReference type="GO" id="GO:0006808">
    <property type="term" value="P:regulation of nitrogen utilization"/>
    <property type="evidence" value="ECO:0007669"/>
    <property type="project" value="UniProtKB-UniRule"/>
</dbReference>
<dbReference type="CDD" id="cd04899">
    <property type="entry name" value="ACT_ACR-UUR-like_2"/>
    <property type="match status" value="1"/>
</dbReference>
<dbReference type="CDD" id="cd04900">
    <property type="entry name" value="ACT_UUR-like_1"/>
    <property type="match status" value="1"/>
</dbReference>
<dbReference type="CDD" id="cd00077">
    <property type="entry name" value="HDc"/>
    <property type="match status" value="1"/>
</dbReference>
<dbReference type="CDD" id="cd05401">
    <property type="entry name" value="NT_GlnE_GlnD_like"/>
    <property type="match status" value="1"/>
</dbReference>
<dbReference type="FunFam" id="1.10.3210.10:FF:000005">
    <property type="entry name" value="Bifunctional uridylyltransferase/uridylyl-removing enzyme"/>
    <property type="match status" value="1"/>
</dbReference>
<dbReference type="Gene3D" id="1.10.3210.10">
    <property type="entry name" value="Hypothetical protein af1432"/>
    <property type="match status" value="1"/>
</dbReference>
<dbReference type="HAMAP" id="MF_00277">
    <property type="entry name" value="PII_uridylyl_transf"/>
    <property type="match status" value="1"/>
</dbReference>
<dbReference type="InterPro" id="IPR045865">
    <property type="entry name" value="ACT-like_dom_sf"/>
</dbReference>
<dbReference type="InterPro" id="IPR002912">
    <property type="entry name" value="ACT_dom"/>
</dbReference>
<dbReference type="InterPro" id="IPR003607">
    <property type="entry name" value="HD/PDEase_dom"/>
</dbReference>
<dbReference type="InterPro" id="IPR006674">
    <property type="entry name" value="HD_domain"/>
</dbReference>
<dbReference type="InterPro" id="IPR043519">
    <property type="entry name" value="NT_sf"/>
</dbReference>
<dbReference type="InterPro" id="IPR013546">
    <property type="entry name" value="PII_UdlTrfase/GS_AdlTrfase"/>
</dbReference>
<dbReference type="InterPro" id="IPR002934">
    <property type="entry name" value="Polymerase_NTP_transf_dom"/>
</dbReference>
<dbReference type="InterPro" id="IPR010043">
    <property type="entry name" value="UTase/UR"/>
</dbReference>
<dbReference type="NCBIfam" id="NF002487">
    <property type="entry name" value="PRK01759.1"/>
    <property type="match status" value="1"/>
</dbReference>
<dbReference type="NCBIfam" id="NF003448">
    <property type="entry name" value="PRK05007.1"/>
    <property type="match status" value="1"/>
</dbReference>
<dbReference type="NCBIfam" id="TIGR01693">
    <property type="entry name" value="UTase_glnD"/>
    <property type="match status" value="1"/>
</dbReference>
<dbReference type="PANTHER" id="PTHR47320">
    <property type="entry name" value="BIFUNCTIONAL URIDYLYLTRANSFERASE/URIDYLYL-REMOVING ENZYME"/>
    <property type="match status" value="1"/>
</dbReference>
<dbReference type="PANTHER" id="PTHR47320:SF1">
    <property type="entry name" value="BIFUNCTIONAL URIDYLYLTRANSFERASE_URIDYLYL-REMOVING ENZYME"/>
    <property type="match status" value="1"/>
</dbReference>
<dbReference type="Pfam" id="PF01842">
    <property type="entry name" value="ACT"/>
    <property type="match status" value="2"/>
</dbReference>
<dbReference type="Pfam" id="PF08335">
    <property type="entry name" value="GlnD_UR_UTase"/>
    <property type="match status" value="1"/>
</dbReference>
<dbReference type="Pfam" id="PF01966">
    <property type="entry name" value="HD"/>
    <property type="match status" value="1"/>
</dbReference>
<dbReference type="Pfam" id="PF01909">
    <property type="entry name" value="NTP_transf_2"/>
    <property type="match status" value="1"/>
</dbReference>
<dbReference type="PIRSF" id="PIRSF006288">
    <property type="entry name" value="PII_uridyltransf"/>
    <property type="match status" value="1"/>
</dbReference>
<dbReference type="SMART" id="SM00471">
    <property type="entry name" value="HDc"/>
    <property type="match status" value="1"/>
</dbReference>
<dbReference type="SUPFAM" id="SSF55021">
    <property type="entry name" value="ACT-like"/>
    <property type="match status" value="2"/>
</dbReference>
<dbReference type="SUPFAM" id="SSF109604">
    <property type="entry name" value="HD-domain/PDEase-like"/>
    <property type="match status" value="1"/>
</dbReference>
<dbReference type="SUPFAM" id="SSF81301">
    <property type="entry name" value="Nucleotidyltransferase"/>
    <property type="match status" value="1"/>
</dbReference>
<dbReference type="SUPFAM" id="SSF81593">
    <property type="entry name" value="Nucleotidyltransferase substrate binding subunit/domain"/>
    <property type="match status" value="1"/>
</dbReference>
<dbReference type="PROSITE" id="PS51671">
    <property type="entry name" value="ACT"/>
    <property type="match status" value="2"/>
</dbReference>
<dbReference type="PROSITE" id="PS51831">
    <property type="entry name" value="HD"/>
    <property type="match status" value="1"/>
</dbReference>
<organism>
    <name type="scientific">Escherichia coli O1:K1 / APEC</name>
    <dbReference type="NCBI Taxonomy" id="405955"/>
    <lineage>
        <taxon>Bacteria</taxon>
        <taxon>Pseudomonadati</taxon>
        <taxon>Pseudomonadota</taxon>
        <taxon>Gammaproteobacteria</taxon>
        <taxon>Enterobacterales</taxon>
        <taxon>Enterobacteriaceae</taxon>
        <taxon>Escherichia</taxon>
    </lineage>
</organism>
<feature type="chain" id="PRO_1000022339" description="Bifunctional uridylyltransferase/uridylyl-removing enzyme">
    <location>
        <begin position="1"/>
        <end position="890"/>
    </location>
</feature>
<feature type="domain" description="HD" evidence="2">
    <location>
        <begin position="468"/>
        <end position="590"/>
    </location>
</feature>
<feature type="domain" description="ACT 1" evidence="1">
    <location>
        <begin position="709"/>
        <end position="789"/>
    </location>
</feature>
<feature type="domain" description="ACT 2" evidence="1">
    <location>
        <begin position="816"/>
        <end position="890"/>
    </location>
</feature>
<feature type="region of interest" description="Uridylyltransferase">
    <location>
        <begin position="1"/>
        <end position="349"/>
    </location>
</feature>
<feature type="region of interest" description="Uridylyl-removing">
    <location>
        <begin position="350"/>
        <end position="708"/>
    </location>
</feature>
<protein>
    <recommendedName>
        <fullName evidence="1">Bifunctional uridylyltransferase/uridylyl-removing enzyme</fullName>
        <shortName evidence="1">UTase/UR</shortName>
    </recommendedName>
    <alternativeName>
        <fullName evidence="1">Bifunctional [protein-PII] modification enzyme</fullName>
    </alternativeName>
    <alternativeName>
        <fullName evidence="1">Bifunctional nitrogen sensor protein</fullName>
    </alternativeName>
    <domain>
        <recommendedName>
            <fullName evidence="1">[Protein-PII] uridylyltransferase</fullName>
            <shortName evidence="1">PII uridylyltransferase</shortName>
            <shortName evidence="1">UTase</shortName>
            <ecNumber evidence="1">2.7.7.59</ecNumber>
        </recommendedName>
    </domain>
    <domain>
        <recommendedName>
            <fullName evidence="1">[Protein-PII]-UMP uridylyl-removing enzyme</fullName>
            <shortName evidence="1">UR</shortName>
            <ecNumber evidence="1">3.1.4.-</ecNumber>
        </recommendedName>
    </domain>
</protein>
<reference key="1">
    <citation type="journal article" date="2007" name="J. Bacteriol.">
        <title>The genome sequence of avian pathogenic Escherichia coli strain O1:K1:H7 shares strong similarities with human extraintestinal pathogenic E. coli genomes.</title>
        <authorList>
            <person name="Johnson T.J."/>
            <person name="Kariyawasam S."/>
            <person name="Wannemuehler Y."/>
            <person name="Mangiamele P."/>
            <person name="Johnson S.J."/>
            <person name="Doetkott C."/>
            <person name="Skyberg J.A."/>
            <person name="Lynne A.M."/>
            <person name="Johnson J.R."/>
            <person name="Nolan L.K."/>
        </authorList>
    </citation>
    <scope>NUCLEOTIDE SEQUENCE [LARGE SCALE GENOMIC DNA]</scope>
</reference>
<name>GLND_ECOK1</name>